<evidence type="ECO:0000255" key="1">
    <source>
        <dbReference type="HAMAP-Rule" id="MF_01152"/>
    </source>
</evidence>
<gene>
    <name evidence="1" type="primary">dnaJ</name>
    <name type="ordered locus">BB3933</name>
</gene>
<keyword id="KW-0143">Chaperone</keyword>
<keyword id="KW-0963">Cytoplasm</keyword>
<keyword id="KW-0235">DNA replication</keyword>
<keyword id="KW-0479">Metal-binding</keyword>
<keyword id="KW-0677">Repeat</keyword>
<keyword id="KW-0346">Stress response</keyword>
<keyword id="KW-0862">Zinc</keyword>
<keyword id="KW-0863">Zinc-finger</keyword>
<name>DNAJ_BORBR</name>
<organism>
    <name type="scientific">Bordetella bronchiseptica (strain ATCC BAA-588 / NCTC 13252 / RB50)</name>
    <name type="common">Alcaligenes bronchisepticus</name>
    <dbReference type="NCBI Taxonomy" id="257310"/>
    <lineage>
        <taxon>Bacteria</taxon>
        <taxon>Pseudomonadati</taxon>
        <taxon>Pseudomonadota</taxon>
        <taxon>Betaproteobacteria</taxon>
        <taxon>Burkholderiales</taxon>
        <taxon>Alcaligenaceae</taxon>
        <taxon>Bordetella</taxon>
    </lineage>
</organism>
<reference key="1">
    <citation type="journal article" date="2003" name="Nat. Genet.">
        <title>Comparative analysis of the genome sequences of Bordetella pertussis, Bordetella parapertussis and Bordetella bronchiseptica.</title>
        <authorList>
            <person name="Parkhill J."/>
            <person name="Sebaihia M."/>
            <person name="Preston A."/>
            <person name="Murphy L.D."/>
            <person name="Thomson N.R."/>
            <person name="Harris D.E."/>
            <person name="Holden M.T.G."/>
            <person name="Churcher C.M."/>
            <person name="Bentley S.D."/>
            <person name="Mungall K.L."/>
            <person name="Cerdeno-Tarraga A.-M."/>
            <person name="Temple L."/>
            <person name="James K.D."/>
            <person name="Harris B."/>
            <person name="Quail M.A."/>
            <person name="Achtman M."/>
            <person name="Atkin R."/>
            <person name="Baker S."/>
            <person name="Basham D."/>
            <person name="Bason N."/>
            <person name="Cherevach I."/>
            <person name="Chillingworth T."/>
            <person name="Collins M."/>
            <person name="Cronin A."/>
            <person name="Davis P."/>
            <person name="Doggett J."/>
            <person name="Feltwell T."/>
            <person name="Goble A."/>
            <person name="Hamlin N."/>
            <person name="Hauser H."/>
            <person name="Holroyd S."/>
            <person name="Jagels K."/>
            <person name="Leather S."/>
            <person name="Moule S."/>
            <person name="Norberczak H."/>
            <person name="O'Neil S."/>
            <person name="Ormond D."/>
            <person name="Price C."/>
            <person name="Rabbinowitsch E."/>
            <person name="Rutter S."/>
            <person name="Sanders M."/>
            <person name="Saunders D."/>
            <person name="Seeger K."/>
            <person name="Sharp S."/>
            <person name="Simmonds M."/>
            <person name="Skelton J."/>
            <person name="Squares R."/>
            <person name="Squares S."/>
            <person name="Stevens K."/>
            <person name="Unwin L."/>
            <person name="Whitehead S."/>
            <person name="Barrell B.G."/>
            <person name="Maskell D.J."/>
        </authorList>
    </citation>
    <scope>NUCLEOTIDE SEQUENCE [LARGE SCALE GENOMIC DNA]</scope>
    <source>
        <strain>ATCC BAA-588 / NCTC 13252 / RB50</strain>
    </source>
</reference>
<sequence>MAKRDYYEVLGVAKNASDEDLKKAYRKLAMKYHPDRNPDSKEAEEKFKEAKEAYEVLGDEQKRAAYDRYGHAGVDPNAAGMGGGMGGGFADAFGDIFGEIFGAGRRGGGGPQVYRGADLKYALEITLEQAASGFDTEIRVPSWENCDTCHGSGAKAGTSPKTCRTCGGSGAVRMQQGFFSVQQTCPTCHGTGKEITDPCPSCDGVGRTRRNKTLQVKIPAGIDDGMRIRSSGNGEPGINGGPPGDLYVEIHIKQHKIFQRDGDDLHCELTIPFTTAALGGELQVPTLGGKAEISIPEGTQSGKTFRLRAKGIRGVRGSYPGDLYCHVVVETPVRLSDEQKAILRQFEASLNDGGDRHSPQSKSWTDRVKEFFS</sequence>
<protein>
    <recommendedName>
        <fullName evidence="1">Chaperone protein DnaJ</fullName>
    </recommendedName>
</protein>
<comment type="function">
    <text evidence="1">Participates actively in the response to hyperosmotic and heat shock by preventing the aggregation of stress-denatured proteins and by disaggregating proteins, also in an autonomous, DnaK-independent fashion. Unfolded proteins bind initially to DnaJ; upon interaction with the DnaJ-bound protein, DnaK hydrolyzes its bound ATP, resulting in the formation of a stable complex. GrpE releases ADP from DnaK; ATP binding to DnaK triggers the release of the substrate protein, thus completing the reaction cycle. Several rounds of ATP-dependent interactions between DnaJ, DnaK and GrpE are required for fully efficient folding. Also involved, together with DnaK and GrpE, in the DNA replication of plasmids through activation of initiation proteins.</text>
</comment>
<comment type="cofactor">
    <cofactor evidence="1">
        <name>Zn(2+)</name>
        <dbReference type="ChEBI" id="CHEBI:29105"/>
    </cofactor>
    <text evidence="1">Binds 2 Zn(2+) ions per monomer.</text>
</comment>
<comment type="subunit">
    <text evidence="1">Homodimer.</text>
</comment>
<comment type="subcellular location">
    <subcellularLocation>
        <location evidence="1">Cytoplasm</location>
    </subcellularLocation>
</comment>
<comment type="domain">
    <text evidence="1">The J domain is necessary and sufficient to stimulate DnaK ATPase activity. Zinc center 1 plays an important role in the autonomous, DnaK-independent chaperone activity of DnaJ. Zinc center 2 is essential for interaction with DnaK and for DnaJ activity.</text>
</comment>
<comment type="similarity">
    <text evidence="1">Belongs to the DnaJ family.</text>
</comment>
<dbReference type="EMBL" id="BX640449">
    <property type="protein sequence ID" value="CAE34296.1"/>
    <property type="molecule type" value="Genomic_DNA"/>
</dbReference>
<dbReference type="RefSeq" id="WP_003821186.1">
    <property type="nucleotide sequence ID" value="NC_002927.3"/>
</dbReference>
<dbReference type="SMR" id="Q7WGI5"/>
<dbReference type="GeneID" id="56477582"/>
<dbReference type="KEGG" id="bbr:BB3933"/>
<dbReference type="eggNOG" id="COG0484">
    <property type="taxonomic scope" value="Bacteria"/>
</dbReference>
<dbReference type="HOGENOM" id="CLU_017633_0_7_4"/>
<dbReference type="Proteomes" id="UP000001027">
    <property type="component" value="Chromosome"/>
</dbReference>
<dbReference type="GO" id="GO:0005737">
    <property type="term" value="C:cytoplasm"/>
    <property type="evidence" value="ECO:0007669"/>
    <property type="project" value="UniProtKB-SubCell"/>
</dbReference>
<dbReference type="GO" id="GO:0005524">
    <property type="term" value="F:ATP binding"/>
    <property type="evidence" value="ECO:0007669"/>
    <property type="project" value="InterPro"/>
</dbReference>
<dbReference type="GO" id="GO:0031072">
    <property type="term" value="F:heat shock protein binding"/>
    <property type="evidence" value="ECO:0007669"/>
    <property type="project" value="InterPro"/>
</dbReference>
<dbReference type="GO" id="GO:0051082">
    <property type="term" value="F:unfolded protein binding"/>
    <property type="evidence" value="ECO:0007669"/>
    <property type="project" value="UniProtKB-UniRule"/>
</dbReference>
<dbReference type="GO" id="GO:0008270">
    <property type="term" value="F:zinc ion binding"/>
    <property type="evidence" value="ECO:0007669"/>
    <property type="project" value="UniProtKB-UniRule"/>
</dbReference>
<dbReference type="GO" id="GO:0051085">
    <property type="term" value="P:chaperone cofactor-dependent protein refolding"/>
    <property type="evidence" value="ECO:0007669"/>
    <property type="project" value="TreeGrafter"/>
</dbReference>
<dbReference type="GO" id="GO:0006260">
    <property type="term" value="P:DNA replication"/>
    <property type="evidence" value="ECO:0007669"/>
    <property type="project" value="UniProtKB-KW"/>
</dbReference>
<dbReference type="GO" id="GO:0042026">
    <property type="term" value="P:protein refolding"/>
    <property type="evidence" value="ECO:0007669"/>
    <property type="project" value="TreeGrafter"/>
</dbReference>
<dbReference type="GO" id="GO:0009408">
    <property type="term" value="P:response to heat"/>
    <property type="evidence" value="ECO:0007669"/>
    <property type="project" value="InterPro"/>
</dbReference>
<dbReference type="CDD" id="cd06257">
    <property type="entry name" value="DnaJ"/>
    <property type="match status" value="1"/>
</dbReference>
<dbReference type="CDD" id="cd10747">
    <property type="entry name" value="DnaJ_C"/>
    <property type="match status" value="1"/>
</dbReference>
<dbReference type="CDD" id="cd10719">
    <property type="entry name" value="DnaJ_zf"/>
    <property type="match status" value="1"/>
</dbReference>
<dbReference type="FunFam" id="1.10.287.110:FF:000034">
    <property type="entry name" value="Chaperone protein DnaJ"/>
    <property type="match status" value="1"/>
</dbReference>
<dbReference type="FunFam" id="2.10.230.10:FF:000002">
    <property type="entry name" value="Molecular chaperone DnaJ"/>
    <property type="match status" value="1"/>
</dbReference>
<dbReference type="FunFam" id="2.60.260.20:FF:000004">
    <property type="entry name" value="Molecular chaperone DnaJ"/>
    <property type="match status" value="1"/>
</dbReference>
<dbReference type="Gene3D" id="1.10.287.110">
    <property type="entry name" value="DnaJ domain"/>
    <property type="match status" value="1"/>
</dbReference>
<dbReference type="Gene3D" id="2.10.230.10">
    <property type="entry name" value="Heat shock protein DnaJ, cysteine-rich domain"/>
    <property type="match status" value="1"/>
</dbReference>
<dbReference type="Gene3D" id="2.60.260.20">
    <property type="entry name" value="Urease metallochaperone UreE, N-terminal domain"/>
    <property type="match status" value="2"/>
</dbReference>
<dbReference type="HAMAP" id="MF_01152">
    <property type="entry name" value="DnaJ"/>
    <property type="match status" value="1"/>
</dbReference>
<dbReference type="InterPro" id="IPR012724">
    <property type="entry name" value="DnaJ"/>
</dbReference>
<dbReference type="InterPro" id="IPR002939">
    <property type="entry name" value="DnaJ_C"/>
</dbReference>
<dbReference type="InterPro" id="IPR001623">
    <property type="entry name" value="DnaJ_domain"/>
</dbReference>
<dbReference type="InterPro" id="IPR018253">
    <property type="entry name" value="DnaJ_domain_CS"/>
</dbReference>
<dbReference type="InterPro" id="IPR008971">
    <property type="entry name" value="HSP40/DnaJ_pept-bd"/>
</dbReference>
<dbReference type="InterPro" id="IPR001305">
    <property type="entry name" value="HSP_DnaJ_Cys-rich_dom"/>
</dbReference>
<dbReference type="InterPro" id="IPR036410">
    <property type="entry name" value="HSP_DnaJ_Cys-rich_dom_sf"/>
</dbReference>
<dbReference type="InterPro" id="IPR036869">
    <property type="entry name" value="J_dom_sf"/>
</dbReference>
<dbReference type="NCBIfam" id="TIGR02349">
    <property type="entry name" value="DnaJ_bact"/>
    <property type="match status" value="1"/>
</dbReference>
<dbReference type="NCBIfam" id="NF008035">
    <property type="entry name" value="PRK10767.1"/>
    <property type="match status" value="1"/>
</dbReference>
<dbReference type="PANTHER" id="PTHR43096:SF48">
    <property type="entry name" value="CHAPERONE PROTEIN DNAJ"/>
    <property type="match status" value="1"/>
</dbReference>
<dbReference type="PANTHER" id="PTHR43096">
    <property type="entry name" value="DNAJ HOMOLOG 1, MITOCHONDRIAL-RELATED"/>
    <property type="match status" value="1"/>
</dbReference>
<dbReference type="Pfam" id="PF00226">
    <property type="entry name" value="DnaJ"/>
    <property type="match status" value="1"/>
</dbReference>
<dbReference type="Pfam" id="PF01556">
    <property type="entry name" value="DnaJ_C"/>
    <property type="match status" value="1"/>
</dbReference>
<dbReference type="Pfam" id="PF00684">
    <property type="entry name" value="DnaJ_CXXCXGXG"/>
    <property type="match status" value="1"/>
</dbReference>
<dbReference type="PRINTS" id="PR00625">
    <property type="entry name" value="JDOMAIN"/>
</dbReference>
<dbReference type="SMART" id="SM00271">
    <property type="entry name" value="DnaJ"/>
    <property type="match status" value="1"/>
</dbReference>
<dbReference type="SUPFAM" id="SSF46565">
    <property type="entry name" value="Chaperone J-domain"/>
    <property type="match status" value="1"/>
</dbReference>
<dbReference type="SUPFAM" id="SSF57938">
    <property type="entry name" value="DnaJ/Hsp40 cysteine-rich domain"/>
    <property type="match status" value="1"/>
</dbReference>
<dbReference type="SUPFAM" id="SSF49493">
    <property type="entry name" value="HSP40/DnaJ peptide-binding domain"/>
    <property type="match status" value="2"/>
</dbReference>
<dbReference type="PROSITE" id="PS00636">
    <property type="entry name" value="DNAJ_1"/>
    <property type="match status" value="1"/>
</dbReference>
<dbReference type="PROSITE" id="PS50076">
    <property type="entry name" value="DNAJ_2"/>
    <property type="match status" value="1"/>
</dbReference>
<dbReference type="PROSITE" id="PS51188">
    <property type="entry name" value="ZF_CR"/>
    <property type="match status" value="1"/>
</dbReference>
<feature type="chain" id="PRO_0000070734" description="Chaperone protein DnaJ">
    <location>
        <begin position="1"/>
        <end position="373"/>
    </location>
</feature>
<feature type="domain" description="J" evidence="1">
    <location>
        <begin position="5"/>
        <end position="70"/>
    </location>
</feature>
<feature type="repeat" description="CXXCXGXG motif">
    <location>
        <begin position="146"/>
        <end position="153"/>
    </location>
</feature>
<feature type="repeat" description="CXXCXGXG motif">
    <location>
        <begin position="163"/>
        <end position="170"/>
    </location>
</feature>
<feature type="repeat" description="CXXCXGXG motif">
    <location>
        <begin position="185"/>
        <end position="192"/>
    </location>
</feature>
<feature type="repeat" description="CXXCXGXG motif">
    <location>
        <begin position="199"/>
        <end position="206"/>
    </location>
</feature>
<feature type="zinc finger region" description="CR-type" evidence="1">
    <location>
        <begin position="133"/>
        <end position="211"/>
    </location>
</feature>
<feature type="binding site" evidence="1">
    <location>
        <position position="146"/>
    </location>
    <ligand>
        <name>Zn(2+)</name>
        <dbReference type="ChEBI" id="CHEBI:29105"/>
        <label>1</label>
    </ligand>
</feature>
<feature type="binding site" evidence="1">
    <location>
        <position position="149"/>
    </location>
    <ligand>
        <name>Zn(2+)</name>
        <dbReference type="ChEBI" id="CHEBI:29105"/>
        <label>1</label>
    </ligand>
</feature>
<feature type="binding site" evidence="1">
    <location>
        <position position="163"/>
    </location>
    <ligand>
        <name>Zn(2+)</name>
        <dbReference type="ChEBI" id="CHEBI:29105"/>
        <label>2</label>
    </ligand>
</feature>
<feature type="binding site" evidence="1">
    <location>
        <position position="166"/>
    </location>
    <ligand>
        <name>Zn(2+)</name>
        <dbReference type="ChEBI" id="CHEBI:29105"/>
        <label>2</label>
    </ligand>
</feature>
<feature type="binding site" evidence="1">
    <location>
        <position position="185"/>
    </location>
    <ligand>
        <name>Zn(2+)</name>
        <dbReference type="ChEBI" id="CHEBI:29105"/>
        <label>2</label>
    </ligand>
</feature>
<feature type="binding site" evidence="1">
    <location>
        <position position="188"/>
    </location>
    <ligand>
        <name>Zn(2+)</name>
        <dbReference type="ChEBI" id="CHEBI:29105"/>
        <label>2</label>
    </ligand>
</feature>
<feature type="binding site" evidence="1">
    <location>
        <position position="199"/>
    </location>
    <ligand>
        <name>Zn(2+)</name>
        <dbReference type="ChEBI" id="CHEBI:29105"/>
        <label>1</label>
    </ligand>
</feature>
<feature type="binding site" evidence="1">
    <location>
        <position position="202"/>
    </location>
    <ligand>
        <name>Zn(2+)</name>
        <dbReference type="ChEBI" id="CHEBI:29105"/>
        <label>1</label>
    </ligand>
</feature>
<accession>Q7WGI5</accession>
<proteinExistence type="inferred from homology"/>